<evidence type="ECO:0000250" key="1">
    <source>
        <dbReference type="UniProtKB" id="Q5EHP3"/>
    </source>
</evidence>
<evidence type="ECO:0000269" key="2">
    <source>
    </source>
</evidence>
<evidence type="ECO:0000303" key="3">
    <source>
    </source>
</evidence>
<evidence type="ECO:0000305" key="4"/>
<evidence type="ECO:0000305" key="5">
    <source>
    </source>
</evidence>
<protein>
    <recommendedName>
        <fullName evidence="3">Conotoxin reg3m</fullName>
    </recommendedName>
</protein>
<comment type="subcellular location">
    <subcellularLocation>
        <location evidence="2">Secreted</location>
    </subcellularLocation>
</comment>
<comment type="tissue specificity">
    <text evidence="5">Expressed by the venom duct.</text>
</comment>
<comment type="domain">
    <text evidence="4">The cysteine framework is III (CC-C-C-CC). Classified in the M-1 branch, since 1 residue stands between the fourth and the fifth cysteine residues.</text>
</comment>
<comment type="similarity">
    <text evidence="4">Belongs to the conotoxin M superfamily.</text>
</comment>
<feature type="peptide" id="PRO_0000444771" description="Conotoxin reg3m" evidence="2">
    <location>
        <begin position="1"/>
        <end position="17"/>
    </location>
</feature>
<feature type="disulfide bond" evidence="1">
    <location>
        <begin position="4"/>
        <end position="15"/>
    </location>
</feature>
<feature type="disulfide bond" evidence="1">
    <location>
        <begin position="5"/>
        <end position="13"/>
    </location>
</feature>
<feature type="disulfide bond" evidence="1">
    <location>
        <begin position="9"/>
        <end position="16"/>
    </location>
</feature>
<proteinExistence type="evidence at protein level"/>
<organism>
    <name type="scientific">Conus regius</name>
    <name type="common">Crown cone</name>
    <dbReference type="NCBI Taxonomy" id="101314"/>
    <lineage>
        <taxon>Eukaryota</taxon>
        <taxon>Metazoa</taxon>
        <taxon>Spiralia</taxon>
        <taxon>Lophotrochozoa</taxon>
        <taxon>Mollusca</taxon>
        <taxon>Gastropoda</taxon>
        <taxon>Caenogastropoda</taxon>
        <taxon>Neogastropoda</taxon>
        <taxon>Conoidea</taxon>
        <taxon>Conidae</taxon>
        <taxon>Conus</taxon>
        <taxon>Stephanoconus</taxon>
    </lineage>
</organism>
<name>CM3M_CONRE</name>
<sequence length="17" mass="1837">IVRCCSATCKXSCVCCF</sequence>
<accession>P0DPJ8</accession>
<reference key="1">
    <citation type="journal article" date="2017" name="FEBS J.">
        <title>Structural plasticity of Mini-M conotoxins: expression of all mini-M subtypes by Conus regius.</title>
        <authorList>
            <person name="Franco A."/>
            <person name="Dovell S."/>
            <person name="Moller C."/>
            <person name="Grandal M."/>
            <person name="Clark E."/>
            <person name="Mari F."/>
        </authorList>
    </citation>
    <scope>PROTEIN SEQUENCE</scope>
    <scope>SUBCELLULAR LOCATION</scope>
    <source>
        <tissue>Venom</tissue>
    </source>
</reference>
<dbReference type="GO" id="GO:0005576">
    <property type="term" value="C:extracellular region"/>
    <property type="evidence" value="ECO:0007669"/>
    <property type="project" value="UniProtKB-SubCell"/>
</dbReference>
<dbReference type="GO" id="GO:0090729">
    <property type="term" value="F:toxin activity"/>
    <property type="evidence" value="ECO:0007669"/>
    <property type="project" value="UniProtKB-KW"/>
</dbReference>
<keyword id="KW-0903">Direct protein sequencing</keyword>
<keyword id="KW-1015">Disulfide bond</keyword>
<keyword id="KW-0964">Secreted</keyword>
<keyword id="KW-0800">Toxin</keyword>